<proteinExistence type="inferred from homology"/>
<name>ATG5_CRYNB</name>
<reference key="1">
    <citation type="journal article" date="2005" name="Science">
        <title>The genome of the basidiomycetous yeast and human pathogen Cryptococcus neoformans.</title>
        <authorList>
            <person name="Loftus B.J."/>
            <person name="Fung E."/>
            <person name="Roncaglia P."/>
            <person name="Rowley D."/>
            <person name="Amedeo P."/>
            <person name="Bruno D."/>
            <person name="Vamathevan J."/>
            <person name="Miranda M."/>
            <person name="Anderson I.J."/>
            <person name="Fraser J.A."/>
            <person name="Allen J.E."/>
            <person name="Bosdet I.E."/>
            <person name="Brent M.R."/>
            <person name="Chiu R."/>
            <person name="Doering T.L."/>
            <person name="Donlin M.J."/>
            <person name="D'Souza C.A."/>
            <person name="Fox D.S."/>
            <person name="Grinberg V."/>
            <person name="Fu J."/>
            <person name="Fukushima M."/>
            <person name="Haas B.J."/>
            <person name="Huang J.C."/>
            <person name="Janbon G."/>
            <person name="Jones S.J.M."/>
            <person name="Koo H.L."/>
            <person name="Krzywinski M.I."/>
            <person name="Kwon-Chung K.J."/>
            <person name="Lengeler K.B."/>
            <person name="Maiti R."/>
            <person name="Marra M.A."/>
            <person name="Marra R.E."/>
            <person name="Mathewson C.A."/>
            <person name="Mitchell T.G."/>
            <person name="Pertea M."/>
            <person name="Riggs F.R."/>
            <person name="Salzberg S.L."/>
            <person name="Schein J.E."/>
            <person name="Shvartsbeyn A."/>
            <person name="Shin H."/>
            <person name="Shumway M."/>
            <person name="Specht C.A."/>
            <person name="Suh B.B."/>
            <person name="Tenney A."/>
            <person name="Utterback T.R."/>
            <person name="Wickes B.L."/>
            <person name="Wortman J.R."/>
            <person name="Wye N.H."/>
            <person name="Kronstad J.W."/>
            <person name="Lodge J.K."/>
            <person name="Heitman J."/>
            <person name="Davis R.W."/>
            <person name="Fraser C.M."/>
            <person name="Hyman R.W."/>
        </authorList>
    </citation>
    <scope>NUCLEOTIDE SEQUENCE [LARGE SCALE GENOMIC DNA]</scope>
    <source>
        <strain>B-3501A</strain>
    </source>
</reference>
<accession>P0CM37</accession>
<accession>Q55H73</accession>
<accession>Q5K6S9</accession>
<keyword id="KW-0072">Autophagy</keyword>
<keyword id="KW-1017">Isopeptide bond</keyword>
<keyword id="KW-0472">Membrane</keyword>
<keyword id="KW-0653">Protein transport</keyword>
<keyword id="KW-0813">Transport</keyword>
<keyword id="KW-0832">Ubl conjugation</keyword>
<feature type="chain" id="PRO_0000410020" description="Autophagy protein 5">
    <location>
        <begin position="1"/>
        <end position="339"/>
    </location>
</feature>
<feature type="region of interest" description="Disordered" evidence="2">
    <location>
        <begin position="219"/>
        <end position="241"/>
    </location>
</feature>
<feature type="compositionally biased region" description="Low complexity" evidence="2">
    <location>
        <begin position="219"/>
        <end position="230"/>
    </location>
</feature>
<feature type="cross-link" description="Glycyl lysine isopeptide (Lys-Gly) (interchain with G-Cter in ATG12)" evidence="1">
    <location>
        <position position="168"/>
    </location>
</feature>
<organism>
    <name type="scientific">Cryptococcus neoformans var. neoformans serotype D (strain B-3501A)</name>
    <name type="common">Filobasidiella neoformans</name>
    <dbReference type="NCBI Taxonomy" id="283643"/>
    <lineage>
        <taxon>Eukaryota</taxon>
        <taxon>Fungi</taxon>
        <taxon>Dikarya</taxon>
        <taxon>Basidiomycota</taxon>
        <taxon>Agaricomycotina</taxon>
        <taxon>Tremellomycetes</taxon>
        <taxon>Tremellales</taxon>
        <taxon>Cryptococcaceae</taxon>
        <taxon>Cryptococcus</taxon>
        <taxon>Cryptococcus neoformans species complex</taxon>
    </lineage>
</organism>
<protein>
    <recommendedName>
        <fullName>Autophagy protein 5</fullName>
    </recommendedName>
</protein>
<evidence type="ECO:0000250" key="1"/>
<evidence type="ECO:0000256" key="2">
    <source>
        <dbReference type="SAM" id="MobiDB-lite"/>
    </source>
</evidence>
<evidence type="ECO:0000305" key="3"/>
<gene>
    <name type="primary">ATG5</name>
    <name type="ordered locus">CNBN2440</name>
</gene>
<comment type="function">
    <text evidence="1">Involved in cytoplasm to vacuole transport (Cvt) and autophagic vesicle formation. Autophagy is essential for maintenance of amino acid levels and protein synthesis under nitrogen starvation. Required for selective autophagic degradation of the nucleus (nucleophagy). Also required for mitophagy, which eliminates defective or superfluous mitochondria in order to fulfill cellular energy requirements and prevent excess ROS production. Conjugation with ATG12, through a ubiquitin-like conjugating system involving ATG7 as an E1-like activating enzyme and ATG10 as an E2-like conjugating enzyme, is essential for its function. The ATG12-ATG5 conjugate acts as an E3-like enzyme which is required for lipidation of ATG8 and ATG8 association to the vesicle membranes (By similarity).</text>
</comment>
<comment type="subunit">
    <text evidence="1">Conjugated with ATG12.</text>
</comment>
<comment type="subcellular location">
    <subcellularLocation>
        <location evidence="1">Preautophagosomal structure membrane</location>
        <topology evidence="1">Peripheral membrane protein</topology>
    </subcellularLocation>
</comment>
<comment type="PTM">
    <text evidence="1">Conjugated to ATG12; which is essential for autophagy.</text>
</comment>
<comment type="similarity">
    <text evidence="3">Belongs to the ATG5 family.</text>
</comment>
<sequence length="339" mass="38015">MASPNPAQSTTILFRRLTWQSAVTISIRLADGEPGAGNACDRYYIKAPRYSYLPLFIPEIRENLVELALDDAQLEQIDEKNWWFEEEVSEEDKQRFVRQGACRWHWPIDLVDIHSFISRPQPLPSSIELSSTPRVISLLLHLSNPPQDRLLMPNSIEVCKSQWLNQVKEADFVRWRNTNRVTNLRRVDLEAGWDGIVNNDFDLYAQMVNKIVPLPLLTSSNSTQPSRPSSADPSGPPRAPDSSYATRAIPFKIYLPDNAPVIQEIVPPISESGKPTTLLAVLQVHLPLLFPISSENPYELAFPIAQGILIPQEAEVAWIASCLCGVDGWVRVGVCLSAA</sequence>
<dbReference type="EMBL" id="AAEY01000070">
    <property type="protein sequence ID" value="EAL17152.1"/>
    <property type="molecule type" value="Genomic_DNA"/>
</dbReference>
<dbReference type="RefSeq" id="XP_771799.1">
    <property type="nucleotide sequence ID" value="XM_766706.1"/>
</dbReference>
<dbReference type="SMR" id="P0CM37"/>
<dbReference type="EnsemblFungi" id="AAW47209">
    <property type="protein sequence ID" value="AAW47209"/>
    <property type="gene ID" value="CNN02410"/>
</dbReference>
<dbReference type="GeneID" id="4939857"/>
<dbReference type="KEGG" id="cnb:CNBN2440"/>
<dbReference type="HOGENOM" id="CLU_051894_2_1_1"/>
<dbReference type="OrthoDB" id="4085at5206"/>
<dbReference type="GO" id="GO:0034274">
    <property type="term" value="C:Atg12-Atg5-Atg16 complex"/>
    <property type="evidence" value="ECO:0007669"/>
    <property type="project" value="TreeGrafter"/>
</dbReference>
<dbReference type="GO" id="GO:0005776">
    <property type="term" value="C:autophagosome"/>
    <property type="evidence" value="ECO:0007669"/>
    <property type="project" value="TreeGrafter"/>
</dbReference>
<dbReference type="GO" id="GO:0044233">
    <property type="term" value="C:mitochondria-associated endoplasmic reticulum membrane contact site"/>
    <property type="evidence" value="ECO:0007669"/>
    <property type="project" value="TreeGrafter"/>
</dbReference>
<dbReference type="GO" id="GO:0061908">
    <property type="term" value="C:phagophore"/>
    <property type="evidence" value="ECO:0007669"/>
    <property type="project" value="TreeGrafter"/>
</dbReference>
<dbReference type="GO" id="GO:0034045">
    <property type="term" value="C:phagophore assembly site membrane"/>
    <property type="evidence" value="ECO:0007669"/>
    <property type="project" value="UniProtKB-SubCell"/>
</dbReference>
<dbReference type="GO" id="GO:0019776">
    <property type="term" value="F:Atg8-family ligase activity"/>
    <property type="evidence" value="ECO:0007669"/>
    <property type="project" value="TreeGrafter"/>
</dbReference>
<dbReference type="GO" id="GO:0000422">
    <property type="term" value="P:autophagy of mitochondrion"/>
    <property type="evidence" value="ECO:0007669"/>
    <property type="project" value="TreeGrafter"/>
</dbReference>
<dbReference type="GO" id="GO:0006995">
    <property type="term" value="P:cellular response to nitrogen starvation"/>
    <property type="evidence" value="ECO:0007669"/>
    <property type="project" value="TreeGrafter"/>
</dbReference>
<dbReference type="GO" id="GO:0034727">
    <property type="term" value="P:piecemeal microautophagy of the nucleus"/>
    <property type="evidence" value="ECO:0007669"/>
    <property type="project" value="TreeGrafter"/>
</dbReference>
<dbReference type="GO" id="GO:0015031">
    <property type="term" value="P:protein transport"/>
    <property type="evidence" value="ECO:0007669"/>
    <property type="project" value="UniProtKB-KW"/>
</dbReference>
<dbReference type="FunFam" id="1.10.246.190:FF:000003">
    <property type="entry name" value="Autophagy protein 5"/>
    <property type="match status" value="1"/>
</dbReference>
<dbReference type="FunFam" id="3.10.20.90:FF:000347">
    <property type="entry name" value="Autophagy protein 5"/>
    <property type="match status" value="1"/>
</dbReference>
<dbReference type="Gene3D" id="3.10.20.620">
    <property type="match status" value="1"/>
</dbReference>
<dbReference type="Gene3D" id="1.10.246.190">
    <property type="entry name" value="Autophagy protein Apg5, helix rich domain"/>
    <property type="match status" value="1"/>
</dbReference>
<dbReference type="Gene3D" id="3.10.20.90">
    <property type="entry name" value="Phosphatidylinositol 3-kinase Catalytic Subunit, Chain A, domain 1"/>
    <property type="match status" value="1"/>
</dbReference>
<dbReference type="InterPro" id="IPR007239">
    <property type="entry name" value="Atg5"/>
</dbReference>
<dbReference type="InterPro" id="IPR048940">
    <property type="entry name" value="ATG5_HBR"/>
</dbReference>
<dbReference type="InterPro" id="IPR042526">
    <property type="entry name" value="Atg5_HR"/>
</dbReference>
<dbReference type="InterPro" id="IPR048939">
    <property type="entry name" value="ATG5_UblA"/>
</dbReference>
<dbReference type="InterPro" id="IPR042527">
    <property type="entry name" value="Atg5_UblA_dom_sf"/>
</dbReference>
<dbReference type="InterPro" id="IPR048318">
    <property type="entry name" value="ATG5_UblB"/>
</dbReference>
<dbReference type="PANTHER" id="PTHR13040">
    <property type="entry name" value="AUTOPHAGY PROTEIN 5"/>
    <property type="match status" value="1"/>
</dbReference>
<dbReference type="PANTHER" id="PTHR13040:SF2">
    <property type="entry name" value="AUTOPHAGY PROTEIN 5"/>
    <property type="match status" value="1"/>
</dbReference>
<dbReference type="Pfam" id="PF20637">
    <property type="entry name" value="ATG5_HBR"/>
    <property type="match status" value="1"/>
</dbReference>
<dbReference type="Pfam" id="PF20638">
    <property type="entry name" value="ATG5_UblA"/>
    <property type="match status" value="1"/>
</dbReference>
<dbReference type="Pfam" id="PF04106">
    <property type="entry name" value="ATG5_UblB"/>
    <property type="match status" value="1"/>
</dbReference>